<sequence>AIGPVDEV</sequence>
<evidence type="ECO:0000250" key="1">
    <source>
        <dbReference type="UniProtKB" id="Q70KY3"/>
    </source>
</evidence>
<evidence type="ECO:0000269" key="2">
    <source ref="1"/>
</evidence>
<evidence type="ECO:0000303" key="3">
    <source ref="1"/>
</evidence>
<evidence type="ECO:0000305" key="4"/>
<feature type="chain" id="PRO_0000422126" description="Laccase">
    <location>
        <begin position="1"/>
        <end position="8" status="greater than"/>
    </location>
</feature>
<feature type="non-terminal residue" evidence="3">
    <location>
        <position position="8"/>
    </location>
</feature>
<organism evidence="2">
    <name type="scientific">Sanghuangporus baumii</name>
    <name type="common">Phellinus baumii</name>
    <dbReference type="NCBI Taxonomy" id="108892"/>
    <lineage>
        <taxon>Eukaryota</taxon>
        <taxon>Fungi</taxon>
        <taxon>Dikarya</taxon>
        <taxon>Basidiomycota</taxon>
        <taxon>Agaricomycotina</taxon>
        <taxon>Agaricomycetes</taxon>
        <taxon>Hymenochaetales</taxon>
        <taxon>Hymenochaetaceae</taxon>
        <taxon>Sanghuangporus</taxon>
    </lineage>
</organism>
<protein>
    <recommendedName>
        <fullName evidence="3">Laccase</fullName>
        <ecNumber evidence="2">1.10.3.2</ecNumber>
    </recommendedName>
</protein>
<keyword id="KW-0903">Direct protein sequencing</keyword>
<keyword id="KW-0439">Lignin degradation</keyword>
<keyword id="KW-0560">Oxidoreductase</keyword>
<keyword id="KW-0964">Secreted</keyword>
<accession>C0HJB2</accession>
<proteinExistence type="evidence at protein level"/>
<comment type="function">
    <text evidence="2">Lignin degradation and detoxification of lignin-derived products. Exhibits broad substrate specificity against a range of aromatic compounds with highest activity against guaiacol. Shows lower activity against 4-methylcatechol, 4-hydroxyindole, catechol, hydroquinone and 2,6-dimethoxy-phenol.</text>
</comment>
<comment type="catalytic activity">
    <reaction evidence="2">
        <text>4 hydroquinone + O2 = 4 benzosemiquinone + 2 H2O</text>
        <dbReference type="Rhea" id="RHEA:11276"/>
        <dbReference type="ChEBI" id="CHEBI:15377"/>
        <dbReference type="ChEBI" id="CHEBI:15379"/>
        <dbReference type="ChEBI" id="CHEBI:17594"/>
        <dbReference type="ChEBI" id="CHEBI:17977"/>
        <dbReference type="EC" id="1.10.3.2"/>
    </reaction>
</comment>
<comment type="cofactor">
    <cofactor evidence="2">
        <name>Cu(2+)</name>
        <dbReference type="ChEBI" id="CHEBI:29036"/>
    </cofactor>
    <text evidence="1">Binds 4 Cu cations per monomer.</text>
</comment>
<comment type="activity regulation">
    <text evidence="2">Inhibited by Ca(2+), Fe(2+) and Al(3+).</text>
</comment>
<comment type="biophysicochemical properties">
    <phDependence>
        <text evidence="2">Optimum pH is 2.4. Stable at pH 7.2 and 5.2.</text>
    </phDependence>
    <temperatureDependence>
        <text evidence="2">Optimum temperature is 20 degrees Celsius. Thermostable, maintains activity from 50 to 60 degrees Celsius.</text>
    </temperatureDependence>
</comment>
<comment type="subcellular location">
    <subcellularLocation>
        <location evidence="2">Secreted</location>
    </subcellularLocation>
</comment>
<comment type="miscellaneous">
    <text evidence="2">Inhibits cell proliferation of HepG2 hepatoma cell line with an IC(50) of 2.6 uM and L1210 mouse leukemia cell line with an IC(50)=3.2 uM respectively.</text>
</comment>
<comment type="similarity">
    <text evidence="4">Belongs to the multicopper oxidase family.</text>
</comment>
<name>LAC_SANBA</name>
<reference key="1">
    <citation type="journal article" date="2014" name="J. Mol. Catal., B Enzym.">
        <title>An extracellular laccase with antiproliferative activity from the sanghuang mushroom Inonotus baumii.</title>
        <authorList>
            <person name="Sun J."/>
            <person name="Chen Q.J."/>
            <person name="Zhu J.M."/>
            <person name="Wang H.X."/>
            <person name="Zhang G.Q."/>
        </authorList>
    </citation>
    <scope>PROTEIN SEQUENCE</scope>
    <scope>FUNCTION</scope>
    <scope>CATALYTIC ACTIVITY</scope>
    <scope>COFACTOR</scope>
    <scope>ACTIVITY REGULATION</scope>
    <scope>BIOPHYSICOCHEMICAL PROPERTIES</scope>
    <scope>SUBCELLULAR LOCATION</scope>
    <source>
        <strain evidence="2">MW0801</strain>
        <tissue evidence="2">Mycelium</tissue>
    </source>
</reference>
<dbReference type="EC" id="1.10.3.2" evidence="2"/>
<dbReference type="GO" id="GO:0005615">
    <property type="term" value="C:extracellular space"/>
    <property type="evidence" value="ECO:0000314"/>
    <property type="project" value="UniProtKB"/>
</dbReference>
<dbReference type="GO" id="GO:0052716">
    <property type="term" value="F:hydroquinone:oxygen oxidoreductase activity"/>
    <property type="evidence" value="ECO:0000314"/>
    <property type="project" value="UniProtKB"/>
</dbReference>
<dbReference type="GO" id="GO:0046274">
    <property type="term" value="P:lignin catabolic process"/>
    <property type="evidence" value="ECO:0000314"/>
    <property type="project" value="UniProtKB"/>
</dbReference>